<sequence length="232" mass="26427">MAVISMKQLLEAGVHFGHQTRRWNPKMAPYIFTDRNGIYIIDLQKTVKKVEEAYNFIKQLAAEGETVLFVGTKKQAQEAVQEEAERCGMFYVNQRWLGGMLTNFQTIRRRIDRLQELEKMEENGSLEVLPKKEVAELMHEKEKLQKFLGGIKEMRRLPGALFVIDPRKERIAVAEARKLGIPIVAIVDTNCDPDEVDYVIPGNDDAIRAVRLLTAKMADAVLEGKQGEQLAE</sequence>
<gene>
    <name evidence="1" type="primary">rpsB</name>
    <name type="ordered locus">PTH_1252</name>
</gene>
<evidence type="ECO:0000255" key="1">
    <source>
        <dbReference type="HAMAP-Rule" id="MF_00291"/>
    </source>
</evidence>
<evidence type="ECO:0000305" key="2"/>
<comment type="similarity">
    <text evidence="1">Belongs to the universal ribosomal protein uS2 family.</text>
</comment>
<reference key="1">
    <citation type="journal article" date="2008" name="Genome Res.">
        <title>The genome of Pelotomaculum thermopropionicum reveals niche-associated evolution in anaerobic microbiota.</title>
        <authorList>
            <person name="Kosaka T."/>
            <person name="Kato S."/>
            <person name="Shimoyama T."/>
            <person name="Ishii S."/>
            <person name="Abe T."/>
            <person name="Watanabe K."/>
        </authorList>
    </citation>
    <scope>NUCLEOTIDE SEQUENCE [LARGE SCALE GENOMIC DNA]</scope>
    <source>
        <strain>DSM 13744 / JCM 10971 / SI</strain>
    </source>
</reference>
<name>RS2_PELTS</name>
<feature type="chain" id="PRO_1000078889" description="Small ribosomal subunit protein uS2">
    <location>
        <begin position="1"/>
        <end position="232"/>
    </location>
</feature>
<organism>
    <name type="scientific">Pelotomaculum thermopropionicum (strain DSM 13744 / JCM 10971 / SI)</name>
    <dbReference type="NCBI Taxonomy" id="370438"/>
    <lineage>
        <taxon>Bacteria</taxon>
        <taxon>Bacillati</taxon>
        <taxon>Bacillota</taxon>
        <taxon>Clostridia</taxon>
        <taxon>Eubacteriales</taxon>
        <taxon>Desulfotomaculaceae</taxon>
        <taxon>Pelotomaculum</taxon>
    </lineage>
</organism>
<dbReference type="EMBL" id="AP009389">
    <property type="protein sequence ID" value="BAF59433.1"/>
    <property type="molecule type" value="Genomic_DNA"/>
</dbReference>
<dbReference type="SMR" id="A5D2T5"/>
<dbReference type="STRING" id="370438.PTH_1252"/>
<dbReference type="KEGG" id="pth:PTH_1252"/>
<dbReference type="eggNOG" id="COG0052">
    <property type="taxonomic scope" value="Bacteria"/>
</dbReference>
<dbReference type="HOGENOM" id="CLU_040318_1_2_9"/>
<dbReference type="Proteomes" id="UP000006556">
    <property type="component" value="Chromosome"/>
</dbReference>
<dbReference type="GO" id="GO:0022627">
    <property type="term" value="C:cytosolic small ribosomal subunit"/>
    <property type="evidence" value="ECO:0007669"/>
    <property type="project" value="TreeGrafter"/>
</dbReference>
<dbReference type="GO" id="GO:0003735">
    <property type="term" value="F:structural constituent of ribosome"/>
    <property type="evidence" value="ECO:0007669"/>
    <property type="project" value="InterPro"/>
</dbReference>
<dbReference type="GO" id="GO:0006412">
    <property type="term" value="P:translation"/>
    <property type="evidence" value="ECO:0007669"/>
    <property type="project" value="UniProtKB-UniRule"/>
</dbReference>
<dbReference type="CDD" id="cd01425">
    <property type="entry name" value="RPS2"/>
    <property type="match status" value="1"/>
</dbReference>
<dbReference type="FunFam" id="1.10.287.610:FF:000001">
    <property type="entry name" value="30S ribosomal protein S2"/>
    <property type="match status" value="1"/>
</dbReference>
<dbReference type="Gene3D" id="3.40.50.10490">
    <property type="entry name" value="Glucose-6-phosphate isomerase like protein, domain 1"/>
    <property type="match status" value="1"/>
</dbReference>
<dbReference type="Gene3D" id="1.10.287.610">
    <property type="entry name" value="Helix hairpin bin"/>
    <property type="match status" value="1"/>
</dbReference>
<dbReference type="HAMAP" id="MF_00291_B">
    <property type="entry name" value="Ribosomal_uS2_B"/>
    <property type="match status" value="1"/>
</dbReference>
<dbReference type="InterPro" id="IPR001865">
    <property type="entry name" value="Ribosomal_uS2"/>
</dbReference>
<dbReference type="InterPro" id="IPR005706">
    <property type="entry name" value="Ribosomal_uS2_bac/mit/plastid"/>
</dbReference>
<dbReference type="InterPro" id="IPR018130">
    <property type="entry name" value="Ribosomal_uS2_CS"/>
</dbReference>
<dbReference type="InterPro" id="IPR023591">
    <property type="entry name" value="Ribosomal_uS2_flav_dom_sf"/>
</dbReference>
<dbReference type="NCBIfam" id="TIGR01011">
    <property type="entry name" value="rpsB_bact"/>
    <property type="match status" value="1"/>
</dbReference>
<dbReference type="PANTHER" id="PTHR12534">
    <property type="entry name" value="30S RIBOSOMAL PROTEIN S2 PROKARYOTIC AND ORGANELLAR"/>
    <property type="match status" value="1"/>
</dbReference>
<dbReference type="PANTHER" id="PTHR12534:SF0">
    <property type="entry name" value="SMALL RIBOSOMAL SUBUNIT PROTEIN US2M"/>
    <property type="match status" value="1"/>
</dbReference>
<dbReference type="Pfam" id="PF00318">
    <property type="entry name" value="Ribosomal_S2"/>
    <property type="match status" value="1"/>
</dbReference>
<dbReference type="PRINTS" id="PR00395">
    <property type="entry name" value="RIBOSOMALS2"/>
</dbReference>
<dbReference type="SUPFAM" id="SSF52313">
    <property type="entry name" value="Ribosomal protein S2"/>
    <property type="match status" value="1"/>
</dbReference>
<dbReference type="PROSITE" id="PS00962">
    <property type="entry name" value="RIBOSOMAL_S2_1"/>
    <property type="match status" value="1"/>
</dbReference>
<dbReference type="PROSITE" id="PS00963">
    <property type="entry name" value="RIBOSOMAL_S2_2"/>
    <property type="match status" value="1"/>
</dbReference>
<proteinExistence type="inferred from homology"/>
<accession>A5D2T5</accession>
<protein>
    <recommendedName>
        <fullName evidence="1">Small ribosomal subunit protein uS2</fullName>
    </recommendedName>
    <alternativeName>
        <fullName evidence="2">30S ribosomal protein S2</fullName>
    </alternativeName>
</protein>
<keyword id="KW-1185">Reference proteome</keyword>
<keyword id="KW-0687">Ribonucleoprotein</keyword>
<keyword id="KW-0689">Ribosomal protein</keyword>